<accession>Q046C5</accession>
<name>RL3_LACGA</name>
<comment type="function">
    <text evidence="1">One of the primary rRNA binding proteins, it binds directly near the 3'-end of the 23S rRNA, where it nucleates assembly of the 50S subunit.</text>
</comment>
<comment type="subunit">
    <text evidence="1">Part of the 50S ribosomal subunit. Forms a cluster with proteins L14 and L19.</text>
</comment>
<comment type="similarity">
    <text evidence="1">Belongs to the universal ribosomal protein uL3 family.</text>
</comment>
<evidence type="ECO:0000255" key="1">
    <source>
        <dbReference type="HAMAP-Rule" id="MF_01325"/>
    </source>
</evidence>
<evidence type="ECO:0000256" key="2">
    <source>
        <dbReference type="SAM" id="MobiDB-lite"/>
    </source>
</evidence>
<evidence type="ECO:0000305" key="3"/>
<keyword id="KW-0687">Ribonucleoprotein</keyword>
<keyword id="KW-0689">Ribosomal protein</keyword>
<keyword id="KW-0694">RNA-binding</keyword>
<keyword id="KW-0699">rRNA-binding</keyword>
<proteinExistence type="inferred from homology"/>
<reference key="1">
    <citation type="journal article" date="2006" name="Proc. Natl. Acad. Sci. U.S.A.">
        <title>Comparative genomics of the lactic acid bacteria.</title>
        <authorList>
            <person name="Makarova K.S."/>
            <person name="Slesarev A."/>
            <person name="Wolf Y.I."/>
            <person name="Sorokin A."/>
            <person name="Mirkin B."/>
            <person name="Koonin E.V."/>
            <person name="Pavlov A."/>
            <person name="Pavlova N."/>
            <person name="Karamychev V."/>
            <person name="Polouchine N."/>
            <person name="Shakhova V."/>
            <person name="Grigoriev I."/>
            <person name="Lou Y."/>
            <person name="Rohksar D."/>
            <person name="Lucas S."/>
            <person name="Huang K."/>
            <person name="Goodstein D.M."/>
            <person name="Hawkins T."/>
            <person name="Plengvidhya V."/>
            <person name="Welker D."/>
            <person name="Hughes J."/>
            <person name="Goh Y."/>
            <person name="Benson A."/>
            <person name="Baldwin K."/>
            <person name="Lee J.-H."/>
            <person name="Diaz-Muniz I."/>
            <person name="Dosti B."/>
            <person name="Smeianov V."/>
            <person name="Wechter W."/>
            <person name="Barabote R."/>
            <person name="Lorca G."/>
            <person name="Altermann E."/>
            <person name="Barrangou R."/>
            <person name="Ganesan B."/>
            <person name="Xie Y."/>
            <person name="Rawsthorne H."/>
            <person name="Tamir D."/>
            <person name="Parker C."/>
            <person name="Breidt F."/>
            <person name="Broadbent J.R."/>
            <person name="Hutkins R."/>
            <person name="O'Sullivan D."/>
            <person name="Steele J."/>
            <person name="Unlu G."/>
            <person name="Saier M.H. Jr."/>
            <person name="Klaenhammer T."/>
            <person name="Richardson P."/>
            <person name="Kozyavkin S."/>
            <person name="Weimer B.C."/>
            <person name="Mills D.A."/>
        </authorList>
    </citation>
    <scope>NUCLEOTIDE SEQUENCE [LARGE SCALE GENOMIC DNA]</scope>
    <source>
        <strain>ATCC 33323 / DSM 20243 / BCRC 14619 / CIP 102991 / JCM 1131 / KCTC 3163 / NCIMB 11718 / NCTC 13722 / AM63</strain>
    </source>
</reference>
<feature type="chain" id="PRO_1000052066" description="Large ribosomal subunit protein uL3">
    <location>
        <begin position="1"/>
        <end position="209"/>
    </location>
</feature>
<feature type="region of interest" description="Disordered" evidence="2">
    <location>
        <begin position="112"/>
        <end position="146"/>
    </location>
</feature>
<feature type="compositionally biased region" description="Polar residues" evidence="2">
    <location>
        <begin position="112"/>
        <end position="122"/>
    </location>
</feature>
<protein>
    <recommendedName>
        <fullName evidence="1">Large ribosomal subunit protein uL3</fullName>
    </recommendedName>
    <alternativeName>
        <fullName evidence="3">50S ribosomal protein L3</fullName>
    </alternativeName>
</protein>
<sequence>MTKGILGRKVGMTQIFTKNGILVPVTVIEATPNVVLQVKTNESDGYEAVQVGYQDMREVLSNKPAKGHAAKAKTSPKRFIREIRDVELKDYEVGSEITVDSFSEGDVVDVTGTTRGHGTQGNIKRWGQSRGPETHGSRYHRIPGSMGSIINRVPKGKKLPGHMGGKKVTVQNLVIEKVVPEKNVLLVKGNVPGAKNSLIFVKSAAKAAK</sequence>
<organism>
    <name type="scientific">Lactobacillus gasseri (strain ATCC 33323 / DSM 20243 / BCRC 14619 / CIP 102991 / JCM 1131 / KCTC 3163 / NCIMB 11718 / NCTC 13722 / AM63)</name>
    <dbReference type="NCBI Taxonomy" id="324831"/>
    <lineage>
        <taxon>Bacteria</taxon>
        <taxon>Bacillati</taxon>
        <taxon>Bacillota</taxon>
        <taxon>Bacilli</taxon>
        <taxon>Lactobacillales</taxon>
        <taxon>Lactobacillaceae</taxon>
        <taxon>Lactobacillus</taxon>
    </lineage>
</organism>
<gene>
    <name evidence="1" type="primary">rplC</name>
    <name type="ordered locus">LGAS_0291</name>
</gene>
<dbReference type="EMBL" id="CP000413">
    <property type="protein sequence ID" value="ABJ59697.1"/>
    <property type="molecule type" value="Genomic_DNA"/>
</dbReference>
<dbReference type="RefSeq" id="WP_003651764.1">
    <property type="nucleotide sequence ID" value="NZ_WBMG01000001.1"/>
</dbReference>
<dbReference type="SMR" id="Q046C5"/>
<dbReference type="GeneID" id="29638757"/>
<dbReference type="KEGG" id="lga:LGAS_0291"/>
<dbReference type="HOGENOM" id="CLU_044142_4_1_9"/>
<dbReference type="BioCyc" id="LGAS324831:G1G6Y-289-MONOMER"/>
<dbReference type="Proteomes" id="UP000000664">
    <property type="component" value="Chromosome"/>
</dbReference>
<dbReference type="GO" id="GO:0022625">
    <property type="term" value="C:cytosolic large ribosomal subunit"/>
    <property type="evidence" value="ECO:0007669"/>
    <property type="project" value="TreeGrafter"/>
</dbReference>
<dbReference type="GO" id="GO:0019843">
    <property type="term" value="F:rRNA binding"/>
    <property type="evidence" value="ECO:0007669"/>
    <property type="project" value="UniProtKB-UniRule"/>
</dbReference>
<dbReference type="GO" id="GO:0003735">
    <property type="term" value="F:structural constituent of ribosome"/>
    <property type="evidence" value="ECO:0007669"/>
    <property type="project" value="InterPro"/>
</dbReference>
<dbReference type="GO" id="GO:0006412">
    <property type="term" value="P:translation"/>
    <property type="evidence" value="ECO:0007669"/>
    <property type="project" value="UniProtKB-UniRule"/>
</dbReference>
<dbReference type="FunFam" id="2.40.30.10:FF:000004">
    <property type="entry name" value="50S ribosomal protein L3"/>
    <property type="match status" value="1"/>
</dbReference>
<dbReference type="FunFam" id="3.30.160.810:FF:000002">
    <property type="entry name" value="50S ribosomal protein L3"/>
    <property type="match status" value="1"/>
</dbReference>
<dbReference type="Gene3D" id="3.30.160.810">
    <property type="match status" value="1"/>
</dbReference>
<dbReference type="Gene3D" id="2.40.30.10">
    <property type="entry name" value="Translation factors"/>
    <property type="match status" value="1"/>
</dbReference>
<dbReference type="HAMAP" id="MF_01325_B">
    <property type="entry name" value="Ribosomal_uL3_B"/>
    <property type="match status" value="1"/>
</dbReference>
<dbReference type="InterPro" id="IPR000597">
    <property type="entry name" value="Ribosomal_uL3"/>
</dbReference>
<dbReference type="InterPro" id="IPR019927">
    <property type="entry name" value="Ribosomal_uL3_bac/org-type"/>
</dbReference>
<dbReference type="InterPro" id="IPR019926">
    <property type="entry name" value="Ribosomal_uL3_CS"/>
</dbReference>
<dbReference type="InterPro" id="IPR009000">
    <property type="entry name" value="Transl_B-barrel_sf"/>
</dbReference>
<dbReference type="NCBIfam" id="TIGR03625">
    <property type="entry name" value="L3_bact"/>
    <property type="match status" value="1"/>
</dbReference>
<dbReference type="PANTHER" id="PTHR11229">
    <property type="entry name" value="50S RIBOSOMAL PROTEIN L3"/>
    <property type="match status" value="1"/>
</dbReference>
<dbReference type="PANTHER" id="PTHR11229:SF16">
    <property type="entry name" value="LARGE RIBOSOMAL SUBUNIT PROTEIN UL3C"/>
    <property type="match status" value="1"/>
</dbReference>
<dbReference type="Pfam" id="PF00297">
    <property type="entry name" value="Ribosomal_L3"/>
    <property type="match status" value="1"/>
</dbReference>
<dbReference type="SUPFAM" id="SSF50447">
    <property type="entry name" value="Translation proteins"/>
    <property type="match status" value="1"/>
</dbReference>
<dbReference type="PROSITE" id="PS00474">
    <property type="entry name" value="RIBOSOMAL_L3"/>
    <property type="match status" value="1"/>
</dbReference>